<keyword id="KW-0002">3D-structure</keyword>
<keyword id="KW-0007">Acetylation</keyword>
<keyword id="KW-0903">Direct protein sequencing</keyword>
<keyword id="KW-0647">Proteasome</keyword>
<keyword id="KW-1185">Reference proteome</keyword>
<comment type="function">
    <text evidence="4">Acts as a regulatory subunit of the 26S proteasome which is involved in the ATP-dependent degradation of ubiquitinated proteins.</text>
</comment>
<comment type="interaction">
    <interactant intactId="EBI-15935">
        <id>Q12250</id>
    </interactant>
    <interactant intactId="EBI-33535">
        <id>Q03981</id>
        <label>CSN9</label>
    </interactant>
    <organismsDiffer>false</organismsDiffer>
    <experiments>6</experiments>
</comment>
<comment type="interaction">
    <interactant intactId="EBI-15935">
        <id>Q12250</id>
    </interactant>
    <interactant intactId="EBI-11219">
        <id>P43588</id>
        <label>RPN11</label>
    </interactant>
    <organismsDiffer>false</organismsDiffer>
    <experiments>8</experiments>
</comment>
<comment type="interaction">
    <interactant intactId="EBI-15935">
        <id>Q12250</id>
    </interactant>
    <interactant intactId="EBI-15927">
        <id>P40016</id>
        <label>RPN3</label>
    </interactant>
    <organismsDiffer>false</organismsDiffer>
    <experiments>5</experiments>
</comment>
<comment type="interaction">
    <interactant intactId="EBI-15935">
        <id>Q12250</id>
    </interactant>
    <interactant intactId="EBI-308">
        <id>Q12377</id>
        <label>RPN6</label>
    </interactant>
    <organismsDiffer>false</organismsDiffer>
    <experiments>9</experiments>
</comment>
<comment type="interaction">
    <interactant intactId="EBI-15935">
        <id>Q12250</id>
    </interactant>
    <interactant intactId="EBI-36176">
        <id>Q08723</id>
        <label>RPN8</label>
    </interactant>
    <organismsDiffer>false</organismsDiffer>
    <experiments>9</experiments>
</comment>
<comment type="interaction">
    <interactant intactId="EBI-15935">
        <id>Q12250</id>
    </interactant>
    <interactant intactId="EBI-15944">
        <id>Q04062</id>
        <label>RPN9</label>
    </interactant>
    <organismsDiffer>false</organismsDiffer>
    <experiments>9</experiments>
</comment>
<comment type="PTM">
    <text evidence="2">N-acetylated by NAT1.</text>
</comment>
<comment type="miscellaneous">
    <text evidence="3">Present with 5710 molecules/cell in log phase SD medium.</text>
</comment>
<comment type="similarity">
    <text evidence="5">Belongs to the proteasome subunit p55 family.</text>
</comment>
<name>RPN5_YEAST</name>
<dbReference type="EMBL" id="X97751">
    <property type="protein sequence ID" value="CAA66344.1"/>
    <property type="molecule type" value="Genomic_DNA"/>
</dbReference>
<dbReference type="EMBL" id="Z74195">
    <property type="protein sequence ID" value="CAA98721.1"/>
    <property type="molecule type" value="Genomic_DNA"/>
</dbReference>
<dbReference type="EMBL" id="BK006938">
    <property type="protein sequence ID" value="DAA11711.1"/>
    <property type="molecule type" value="Genomic_DNA"/>
</dbReference>
<dbReference type="PIR" id="S67695">
    <property type="entry name" value="S67695"/>
</dbReference>
<dbReference type="RefSeq" id="NP_010134.1">
    <property type="nucleotide sequence ID" value="NM_001180207.1"/>
</dbReference>
<dbReference type="PDB" id="3J47">
    <property type="method" value="EM"/>
    <property type="chains" value="P=409-442"/>
</dbReference>
<dbReference type="PDB" id="3JCK">
    <property type="method" value="EM"/>
    <property type="resolution" value="3.50 A"/>
    <property type="chains" value="B=1-445"/>
</dbReference>
<dbReference type="PDB" id="3JCO">
    <property type="method" value="EM"/>
    <property type="resolution" value="4.80 A"/>
    <property type="chains" value="P=1-445"/>
</dbReference>
<dbReference type="PDB" id="3JCP">
    <property type="method" value="EM"/>
    <property type="resolution" value="4.60 A"/>
    <property type="chains" value="P=1-445"/>
</dbReference>
<dbReference type="PDB" id="4CR2">
    <property type="method" value="EM"/>
    <property type="resolution" value="7.70 A"/>
    <property type="chains" value="P=1-445"/>
</dbReference>
<dbReference type="PDB" id="4CR3">
    <property type="method" value="EM"/>
    <property type="resolution" value="9.30 A"/>
    <property type="chains" value="P=1-445"/>
</dbReference>
<dbReference type="PDB" id="4CR4">
    <property type="method" value="EM"/>
    <property type="resolution" value="8.80 A"/>
    <property type="chains" value="P=1-445"/>
</dbReference>
<dbReference type="PDB" id="5A5B">
    <property type="method" value="EM"/>
    <property type="resolution" value="9.50 A"/>
    <property type="chains" value="P=1-445"/>
</dbReference>
<dbReference type="PDB" id="5MPB">
    <property type="method" value="EM"/>
    <property type="resolution" value="7.80 A"/>
    <property type="chains" value="P=1-445"/>
</dbReference>
<dbReference type="PDB" id="5MPC">
    <property type="method" value="EM"/>
    <property type="resolution" value="7.70 A"/>
    <property type="chains" value="P=1-445"/>
</dbReference>
<dbReference type="PDB" id="5MPD">
    <property type="method" value="EM"/>
    <property type="resolution" value="4.10 A"/>
    <property type="chains" value="P=1-445"/>
</dbReference>
<dbReference type="PDB" id="5MPE">
    <property type="method" value="EM"/>
    <property type="resolution" value="4.50 A"/>
    <property type="chains" value="P=1-445"/>
</dbReference>
<dbReference type="PDB" id="5WVI">
    <property type="method" value="EM"/>
    <property type="resolution" value="6.30 A"/>
    <property type="chains" value="P=1-445"/>
</dbReference>
<dbReference type="PDB" id="5WVK">
    <property type="method" value="EM"/>
    <property type="resolution" value="4.20 A"/>
    <property type="chains" value="P=1-445"/>
</dbReference>
<dbReference type="PDB" id="5ZMR">
    <property type="method" value="NMR"/>
    <property type="chains" value="A=1-136"/>
</dbReference>
<dbReference type="PDB" id="6FVT">
    <property type="method" value="EM"/>
    <property type="resolution" value="4.10 A"/>
    <property type="chains" value="P=1-440"/>
</dbReference>
<dbReference type="PDB" id="6FVU">
    <property type="method" value="EM"/>
    <property type="resolution" value="4.50 A"/>
    <property type="chains" value="P=1-440"/>
</dbReference>
<dbReference type="PDB" id="6FVV">
    <property type="method" value="EM"/>
    <property type="resolution" value="5.40 A"/>
    <property type="chains" value="P=1-440"/>
</dbReference>
<dbReference type="PDB" id="6FVW">
    <property type="method" value="EM"/>
    <property type="resolution" value="4.50 A"/>
    <property type="chains" value="P=1-440"/>
</dbReference>
<dbReference type="PDB" id="6FVX">
    <property type="method" value="EM"/>
    <property type="resolution" value="4.90 A"/>
    <property type="chains" value="P=1-440"/>
</dbReference>
<dbReference type="PDB" id="6FVY">
    <property type="method" value="EM"/>
    <property type="resolution" value="6.10 A"/>
    <property type="chains" value="P=1-440"/>
</dbReference>
<dbReference type="PDB" id="6J2C">
    <property type="method" value="EM"/>
    <property type="resolution" value="7.00 A"/>
    <property type="chains" value="P=1-445"/>
</dbReference>
<dbReference type="PDB" id="6J2N">
    <property type="method" value="EM"/>
    <property type="resolution" value="7.50 A"/>
    <property type="chains" value="P=1-445"/>
</dbReference>
<dbReference type="PDB" id="6J2Q">
    <property type="method" value="EM"/>
    <property type="resolution" value="3.80 A"/>
    <property type="chains" value="P=1-445"/>
</dbReference>
<dbReference type="PDB" id="6J2X">
    <property type="method" value="EM"/>
    <property type="resolution" value="3.80 A"/>
    <property type="chains" value="P=1-445"/>
</dbReference>
<dbReference type="PDB" id="6J30">
    <property type="method" value="EM"/>
    <property type="resolution" value="4.50 A"/>
    <property type="chains" value="P=1-445"/>
</dbReference>
<dbReference type="PDB" id="7QO3">
    <property type="method" value="EM"/>
    <property type="resolution" value="6.10 A"/>
    <property type="chains" value="P=1-445"/>
</dbReference>
<dbReference type="PDB" id="7QO5">
    <property type="method" value="EM"/>
    <property type="resolution" value="6.00 A"/>
    <property type="chains" value="P=1-445"/>
</dbReference>
<dbReference type="PDBsum" id="3J47"/>
<dbReference type="PDBsum" id="3JCK"/>
<dbReference type="PDBsum" id="3JCO"/>
<dbReference type="PDBsum" id="3JCP"/>
<dbReference type="PDBsum" id="4CR2"/>
<dbReference type="PDBsum" id="4CR3"/>
<dbReference type="PDBsum" id="4CR4"/>
<dbReference type="PDBsum" id="5A5B"/>
<dbReference type="PDBsum" id="5MPB"/>
<dbReference type="PDBsum" id="5MPC"/>
<dbReference type="PDBsum" id="5MPD"/>
<dbReference type="PDBsum" id="5MPE"/>
<dbReference type="PDBsum" id="5WVI"/>
<dbReference type="PDBsum" id="5WVK"/>
<dbReference type="PDBsum" id="5ZMR"/>
<dbReference type="PDBsum" id="6FVT"/>
<dbReference type="PDBsum" id="6FVU"/>
<dbReference type="PDBsum" id="6FVV"/>
<dbReference type="PDBsum" id="6FVW"/>
<dbReference type="PDBsum" id="6FVX"/>
<dbReference type="PDBsum" id="6FVY"/>
<dbReference type="PDBsum" id="6J2C"/>
<dbReference type="PDBsum" id="6J2N"/>
<dbReference type="PDBsum" id="6J2Q"/>
<dbReference type="PDBsum" id="6J2X"/>
<dbReference type="PDBsum" id="6J30"/>
<dbReference type="PDBsum" id="7QO3"/>
<dbReference type="PDBsum" id="7QO5"/>
<dbReference type="EMDB" id="EMD-14082"/>
<dbReference type="EMDB" id="EMD-14084"/>
<dbReference type="EMDB" id="EMD-3136"/>
<dbReference type="EMDB" id="EMD-3536"/>
<dbReference type="EMDB" id="EMD-3537"/>
<dbReference type="EMDB" id="EMD-4321"/>
<dbReference type="EMDB" id="EMD-4322"/>
<dbReference type="EMDB" id="EMD-4323"/>
<dbReference type="EMDB" id="EMD-4324"/>
<dbReference type="EMDB" id="EMD-6693"/>
<dbReference type="EMDB" id="EMD-6694"/>
<dbReference type="EMDB" id="EMD-9769"/>
<dbReference type="EMDB" id="EMD-9770"/>
<dbReference type="EMDB" id="EMD-9771"/>
<dbReference type="EMDB" id="EMD-9772"/>
<dbReference type="EMDB" id="EMD-9773"/>
<dbReference type="SMR" id="Q12250"/>
<dbReference type="BioGRID" id="31914">
    <property type="interactions" value="639"/>
</dbReference>
<dbReference type="ComplexPortal" id="CPX-2262">
    <property type="entry name" value="26S proteasome complex"/>
</dbReference>
<dbReference type="DIP" id="DIP-1578N"/>
<dbReference type="FunCoup" id="Q12250">
    <property type="interactions" value="1432"/>
</dbReference>
<dbReference type="IntAct" id="Q12250">
    <property type="interactions" value="73"/>
</dbReference>
<dbReference type="MINT" id="Q12250"/>
<dbReference type="STRING" id="4932.YDL147W"/>
<dbReference type="iPTMnet" id="Q12250"/>
<dbReference type="PaxDb" id="4932-YDL147W"/>
<dbReference type="PeptideAtlas" id="Q12250"/>
<dbReference type="EnsemblFungi" id="YDL147W_mRNA">
    <property type="protein sequence ID" value="YDL147W"/>
    <property type="gene ID" value="YDL147W"/>
</dbReference>
<dbReference type="GeneID" id="851408"/>
<dbReference type="KEGG" id="sce:YDL147W"/>
<dbReference type="AGR" id="SGD:S000002306"/>
<dbReference type="SGD" id="S000002306">
    <property type="gene designation" value="RPN5"/>
</dbReference>
<dbReference type="VEuPathDB" id="FungiDB:YDL147W"/>
<dbReference type="eggNOG" id="KOG1498">
    <property type="taxonomic scope" value="Eukaryota"/>
</dbReference>
<dbReference type="GeneTree" id="ENSGT00940000153510"/>
<dbReference type="HOGENOM" id="CLU_033860_2_0_1"/>
<dbReference type="InParanoid" id="Q12250"/>
<dbReference type="OMA" id="AENEMFK"/>
<dbReference type="OrthoDB" id="268763at2759"/>
<dbReference type="BioCyc" id="YEAST:G3O-29544-MONOMER"/>
<dbReference type="Reactome" id="R-SCE-1236978">
    <property type="pathway name" value="Cross-presentation of soluble exogenous antigens (endosomes)"/>
</dbReference>
<dbReference type="Reactome" id="R-SCE-5668541">
    <property type="pathway name" value="TNFR2 non-canonical NF-kB pathway"/>
</dbReference>
<dbReference type="Reactome" id="R-SCE-5687128">
    <property type="pathway name" value="MAPK6/MAPK4 signaling"/>
</dbReference>
<dbReference type="Reactome" id="R-SCE-5689880">
    <property type="pathway name" value="Ub-specific processing proteases"/>
</dbReference>
<dbReference type="Reactome" id="R-SCE-6798695">
    <property type="pathway name" value="Neutrophil degranulation"/>
</dbReference>
<dbReference type="Reactome" id="R-SCE-68949">
    <property type="pathway name" value="Orc1 removal from chromatin"/>
</dbReference>
<dbReference type="Reactome" id="R-SCE-69017">
    <property type="pathway name" value="CDK-mediated phosphorylation and removal of Cdc6"/>
</dbReference>
<dbReference type="Reactome" id="R-SCE-69601">
    <property type="pathway name" value="Ubiquitin Mediated Degradation of Phosphorylated Cdc25A"/>
</dbReference>
<dbReference type="Reactome" id="R-SCE-8854050">
    <property type="pathway name" value="FBXL7 down-regulates AURKA during mitotic entry and in early mitosis"/>
</dbReference>
<dbReference type="Reactome" id="R-SCE-8948751">
    <property type="pathway name" value="Regulation of PTEN stability and activity"/>
</dbReference>
<dbReference type="Reactome" id="R-SCE-8951664">
    <property type="pathway name" value="Neddylation"/>
</dbReference>
<dbReference type="Reactome" id="R-SCE-9755511">
    <property type="pathway name" value="KEAP1-NFE2L2 pathway"/>
</dbReference>
<dbReference type="Reactome" id="R-SCE-983168">
    <property type="pathway name" value="Antigen processing: Ubiquitination &amp; Proteasome degradation"/>
</dbReference>
<dbReference type="Reactome" id="R-SCE-9907900">
    <property type="pathway name" value="Proteasome assembly"/>
</dbReference>
<dbReference type="BioGRID-ORCS" id="851408">
    <property type="hits" value="0 hits in 10 CRISPR screens"/>
</dbReference>
<dbReference type="EvolutionaryTrace" id="Q12250"/>
<dbReference type="PRO" id="PR:Q12250"/>
<dbReference type="Proteomes" id="UP000002311">
    <property type="component" value="Chromosome IV"/>
</dbReference>
<dbReference type="RNAct" id="Q12250">
    <property type="molecule type" value="protein"/>
</dbReference>
<dbReference type="GO" id="GO:0008180">
    <property type="term" value="C:COP9 signalosome"/>
    <property type="evidence" value="ECO:0000314"/>
    <property type="project" value="SGD"/>
</dbReference>
<dbReference type="GO" id="GO:0005737">
    <property type="term" value="C:cytoplasm"/>
    <property type="evidence" value="ECO:0000318"/>
    <property type="project" value="GO_Central"/>
</dbReference>
<dbReference type="GO" id="GO:0000502">
    <property type="term" value="C:proteasome complex"/>
    <property type="evidence" value="ECO:0000314"/>
    <property type="project" value="SGD"/>
</dbReference>
<dbReference type="GO" id="GO:0008541">
    <property type="term" value="C:proteasome regulatory particle, lid subcomplex"/>
    <property type="evidence" value="ECO:0000314"/>
    <property type="project" value="SGD"/>
</dbReference>
<dbReference type="GO" id="GO:0034515">
    <property type="term" value="C:proteasome storage granule"/>
    <property type="evidence" value="ECO:0000314"/>
    <property type="project" value="SGD"/>
</dbReference>
<dbReference type="GO" id="GO:0043161">
    <property type="term" value="P:proteasome-mediated ubiquitin-dependent protein catabolic process"/>
    <property type="evidence" value="ECO:0000314"/>
    <property type="project" value="ComplexPortal"/>
</dbReference>
<dbReference type="GO" id="GO:0000338">
    <property type="term" value="P:protein deneddylation"/>
    <property type="evidence" value="ECO:0000315"/>
    <property type="project" value="SGD"/>
</dbReference>
<dbReference type="FunFam" id="1.10.10.10:FF:000070">
    <property type="entry name" value="26S proteasome non-ATPase regulatory subunit 12"/>
    <property type="match status" value="1"/>
</dbReference>
<dbReference type="Gene3D" id="1.10.10.10">
    <property type="entry name" value="Winged helix-like DNA-binding domain superfamily/Winged helix DNA-binding domain"/>
    <property type="match status" value="1"/>
</dbReference>
<dbReference type="InterPro" id="IPR000717">
    <property type="entry name" value="PCI_dom"/>
</dbReference>
<dbReference type="InterPro" id="IPR054559">
    <property type="entry name" value="PSMD12-CSN4-like_N"/>
</dbReference>
<dbReference type="InterPro" id="IPR040134">
    <property type="entry name" value="PSMD12/CSN4"/>
</dbReference>
<dbReference type="InterPro" id="IPR040896">
    <property type="entry name" value="RPN5_C"/>
</dbReference>
<dbReference type="InterPro" id="IPR036388">
    <property type="entry name" value="WH-like_DNA-bd_sf"/>
</dbReference>
<dbReference type="InterPro" id="IPR036390">
    <property type="entry name" value="WH_DNA-bd_sf"/>
</dbReference>
<dbReference type="PANTHER" id="PTHR10855:SF1">
    <property type="entry name" value="26S PROTEASOME NON-ATPASE REGULATORY SUBUNIT 12"/>
    <property type="match status" value="1"/>
</dbReference>
<dbReference type="PANTHER" id="PTHR10855">
    <property type="entry name" value="26S PROTEASOME NON-ATPASE REGULATORY SUBUNIT 12/COP9 SIGNALOSOME COMPLEX SUBUNIT 4"/>
    <property type="match status" value="1"/>
</dbReference>
<dbReference type="Pfam" id="PF01399">
    <property type="entry name" value="PCI"/>
    <property type="match status" value="1"/>
</dbReference>
<dbReference type="Pfam" id="PF22241">
    <property type="entry name" value="PSMD12-CSN4_N"/>
    <property type="match status" value="1"/>
</dbReference>
<dbReference type="Pfam" id="PF18098">
    <property type="entry name" value="RPN5_C"/>
    <property type="match status" value="1"/>
</dbReference>
<dbReference type="SMART" id="SM00088">
    <property type="entry name" value="PINT"/>
    <property type="match status" value="1"/>
</dbReference>
<dbReference type="SUPFAM" id="SSF46785">
    <property type="entry name" value="Winged helix' DNA-binding domain"/>
    <property type="match status" value="1"/>
</dbReference>
<dbReference type="PROSITE" id="PS50250">
    <property type="entry name" value="PCI"/>
    <property type="match status" value="1"/>
</dbReference>
<sequence>MSRDAPIKADKDYSQILKEEFPKIDSLAQNDCNSALDQLLVLEKKTRQASDLASSKEVLAKIVDLLASRNKWDDLNEQLTLLSKKHGQLKLSIQYMIQKVMEYLKSSKSLDLNTRISVIETIRVVTENKIFVEVERARVTKDLVEIKKEEGKIDEAADILCELQVETYGSMEMSEKIQFILEQMELSILKGDYSQATVLSRKILKKTFKNPKYESLKLEYYNLLVKISLHKREYLEVAQYLQEIYQTDAIKSDEAKWKPVLSHIVYFLVLSPYGNLQNDLIHKIQNDNNLKKLESQESLVKLFTTNELMRWPIVQKTYEPVLNEDDLAFGGEANKHHWEDLQKRVIEHNLRVISEYYSRITLLRLNELLDLTESQTETYISDLVNQGIIYAKVNRPAKIVNFEKPKNSSQLLNEWSHNVDELLEHIETIGHLITKEEIMHGLQAK</sequence>
<gene>
    <name type="primary">RPN5</name>
    <name type="synonym">NAS5</name>
    <name type="ordered locus">YDL147W</name>
    <name type="ORF">D1572</name>
</gene>
<accession>Q12250</accession>
<accession>D6VRK1</accession>
<evidence type="ECO:0000255" key="1">
    <source>
        <dbReference type="PROSITE-ProRule" id="PRU01185"/>
    </source>
</evidence>
<evidence type="ECO:0000269" key="2">
    <source>
    </source>
</evidence>
<evidence type="ECO:0000269" key="3">
    <source>
    </source>
</evidence>
<evidence type="ECO:0000269" key="4">
    <source>
    </source>
</evidence>
<evidence type="ECO:0000305" key="5"/>
<evidence type="ECO:0007829" key="6">
    <source>
        <dbReference type="PDB" id="3JCK"/>
    </source>
</evidence>
<evidence type="ECO:0007829" key="7">
    <source>
        <dbReference type="PDB" id="5ZMR"/>
    </source>
</evidence>
<feature type="initiator methionine" description="Removed" evidence="2">
    <location>
        <position position="1"/>
    </location>
</feature>
<feature type="chain" id="PRO_0000173865" description="26S proteasome regulatory subunit RPN5">
    <location>
        <begin position="2"/>
        <end position="445"/>
    </location>
</feature>
<feature type="domain" description="PCI" evidence="1">
    <location>
        <begin position="233"/>
        <end position="407"/>
    </location>
</feature>
<feature type="modified residue" description="N-acetylserine" evidence="2">
    <location>
        <position position="2"/>
    </location>
</feature>
<feature type="strand" evidence="7">
    <location>
        <begin position="3"/>
        <end position="5"/>
    </location>
</feature>
<feature type="helix" evidence="7">
    <location>
        <begin position="15"/>
        <end position="27"/>
    </location>
</feature>
<feature type="turn" evidence="7">
    <location>
        <begin position="28"/>
        <end position="30"/>
    </location>
</feature>
<feature type="helix" evidence="6">
    <location>
        <begin position="32"/>
        <end position="35"/>
    </location>
</feature>
<feature type="helix" evidence="6">
    <location>
        <begin position="37"/>
        <end position="41"/>
    </location>
</feature>
<feature type="helix" evidence="6">
    <location>
        <begin position="42"/>
        <end position="44"/>
    </location>
</feature>
<feature type="helix" evidence="6">
    <location>
        <begin position="49"/>
        <end position="68"/>
    </location>
</feature>
<feature type="turn" evidence="6">
    <location>
        <begin position="69"/>
        <end position="71"/>
    </location>
</feature>
<feature type="helix" evidence="6">
    <location>
        <begin position="72"/>
        <end position="84"/>
    </location>
</feature>
<feature type="helix" evidence="7">
    <location>
        <begin position="90"/>
        <end position="92"/>
    </location>
</feature>
<feature type="helix" evidence="6">
    <location>
        <begin position="94"/>
        <end position="106"/>
    </location>
</feature>
<feature type="helix" evidence="6">
    <location>
        <begin position="111"/>
        <end position="125"/>
    </location>
</feature>
<feature type="helix" evidence="7">
    <location>
        <begin position="127"/>
        <end position="129"/>
    </location>
</feature>
<feature type="helix" evidence="6">
    <location>
        <begin position="135"/>
        <end position="147"/>
    </location>
</feature>
<feature type="helix" evidence="6">
    <location>
        <begin position="153"/>
        <end position="160"/>
    </location>
</feature>
<feature type="turn" evidence="6">
    <location>
        <begin position="161"/>
        <end position="164"/>
    </location>
</feature>
<feature type="helix" evidence="6">
    <location>
        <begin position="165"/>
        <end position="167"/>
    </location>
</feature>
<feature type="turn" evidence="6">
    <location>
        <begin position="168"/>
        <end position="170"/>
    </location>
</feature>
<feature type="helix" evidence="6">
    <location>
        <begin position="173"/>
        <end position="190"/>
    </location>
</feature>
<feature type="helix" evidence="6">
    <location>
        <begin position="194"/>
        <end position="201"/>
    </location>
</feature>
<feature type="helix" evidence="6">
    <location>
        <begin position="205"/>
        <end position="209"/>
    </location>
</feature>
<feature type="helix" evidence="6">
    <location>
        <begin position="211"/>
        <end position="231"/>
    </location>
</feature>
<feature type="helix" evidence="6">
    <location>
        <begin position="235"/>
        <end position="245"/>
    </location>
</feature>
<feature type="helix" evidence="6">
    <location>
        <begin position="248"/>
        <end position="252"/>
    </location>
</feature>
<feature type="helix" evidence="6">
    <location>
        <begin position="254"/>
        <end position="270"/>
    </location>
</feature>
<feature type="helix" evidence="6">
    <location>
        <begin position="275"/>
        <end position="286"/>
    </location>
</feature>
<feature type="helix" evidence="6">
    <location>
        <begin position="288"/>
        <end position="291"/>
    </location>
</feature>
<feature type="helix" evidence="6">
    <location>
        <begin position="295"/>
        <end position="304"/>
    </location>
</feature>
<feature type="helix" evidence="6">
    <location>
        <begin position="311"/>
        <end position="324"/>
    </location>
</feature>
<feature type="turn" evidence="6">
    <location>
        <begin position="326"/>
        <end position="328"/>
    </location>
</feature>
<feature type="strand" evidence="6">
    <location>
        <begin position="331"/>
        <end position="334"/>
    </location>
</feature>
<feature type="helix" evidence="6">
    <location>
        <begin position="337"/>
        <end position="356"/>
    </location>
</feature>
<feature type="strand" evidence="6">
    <location>
        <begin position="357"/>
        <end position="361"/>
    </location>
</feature>
<feature type="helix" evidence="6">
    <location>
        <begin position="362"/>
        <end position="369"/>
    </location>
</feature>
<feature type="helix" evidence="6">
    <location>
        <begin position="373"/>
        <end position="385"/>
    </location>
</feature>
<feature type="strand" evidence="6">
    <location>
        <begin position="392"/>
        <end position="394"/>
    </location>
</feature>
<feature type="turn" evidence="6">
    <location>
        <begin position="395"/>
        <end position="398"/>
    </location>
</feature>
<feature type="strand" evidence="6">
    <location>
        <begin position="399"/>
        <end position="401"/>
    </location>
</feature>
<feature type="helix" evidence="6">
    <location>
        <begin position="408"/>
        <end position="439"/>
    </location>
</feature>
<protein>
    <recommendedName>
        <fullName>26S proteasome regulatory subunit RPN5</fullName>
    </recommendedName>
    <alternativeName>
        <fullName>Proteasome non-ATPase subunit 5</fullName>
    </alternativeName>
</protein>
<proteinExistence type="evidence at protein level"/>
<reference key="1">
    <citation type="journal article" date="1996" name="Yeast">
        <title>Analysis of a 23 kb region on the left arm of yeast chromosome IV.</title>
        <authorList>
            <person name="Delaveau T.T.D."/>
            <person name="Blugeon C."/>
            <person name="Jacq C."/>
            <person name="Perea J."/>
        </authorList>
    </citation>
    <scope>NUCLEOTIDE SEQUENCE [GENOMIC DNA]</scope>
    <source>
        <strain>ATCC 96604 / S288c / FY1679</strain>
    </source>
</reference>
<reference key="2">
    <citation type="journal article" date="1997" name="Nature">
        <title>The nucleotide sequence of Saccharomyces cerevisiae chromosome IV.</title>
        <authorList>
            <person name="Jacq C."/>
            <person name="Alt-Moerbe J."/>
            <person name="Andre B."/>
            <person name="Arnold W."/>
            <person name="Bahr A."/>
            <person name="Ballesta J.P.G."/>
            <person name="Bargues M."/>
            <person name="Baron L."/>
            <person name="Becker A."/>
            <person name="Biteau N."/>
            <person name="Bloecker H."/>
            <person name="Blugeon C."/>
            <person name="Boskovic J."/>
            <person name="Brandt P."/>
            <person name="Brueckner M."/>
            <person name="Buitrago M.J."/>
            <person name="Coster F."/>
            <person name="Delaveau T."/>
            <person name="del Rey F."/>
            <person name="Dujon B."/>
            <person name="Eide L.G."/>
            <person name="Garcia-Cantalejo J.M."/>
            <person name="Goffeau A."/>
            <person name="Gomez-Peris A."/>
            <person name="Granotier C."/>
            <person name="Hanemann V."/>
            <person name="Hankeln T."/>
            <person name="Hoheisel J.D."/>
            <person name="Jaeger W."/>
            <person name="Jimenez A."/>
            <person name="Jonniaux J.-L."/>
            <person name="Kraemer C."/>
            <person name="Kuester H."/>
            <person name="Laamanen P."/>
            <person name="Legros Y."/>
            <person name="Louis E.J."/>
            <person name="Moeller-Rieker S."/>
            <person name="Monnet A."/>
            <person name="Moro M."/>
            <person name="Mueller-Auer S."/>
            <person name="Nussbaumer B."/>
            <person name="Paricio N."/>
            <person name="Paulin L."/>
            <person name="Perea J."/>
            <person name="Perez-Alonso M."/>
            <person name="Perez-Ortin J.E."/>
            <person name="Pohl T.M."/>
            <person name="Prydz H."/>
            <person name="Purnelle B."/>
            <person name="Rasmussen S.W."/>
            <person name="Remacha M.A."/>
            <person name="Revuelta J.L."/>
            <person name="Rieger M."/>
            <person name="Salom D."/>
            <person name="Saluz H.P."/>
            <person name="Saiz J.E."/>
            <person name="Saren A.-M."/>
            <person name="Schaefer M."/>
            <person name="Scharfe M."/>
            <person name="Schmidt E.R."/>
            <person name="Schneider C."/>
            <person name="Scholler P."/>
            <person name="Schwarz S."/>
            <person name="Soler-Mira A."/>
            <person name="Urrestarazu L.A."/>
            <person name="Verhasselt P."/>
            <person name="Vissers S."/>
            <person name="Voet M."/>
            <person name="Volckaert G."/>
            <person name="Wagner G."/>
            <person name="Wambutt R."/>
            <person name="Wedler E."/>
            <person name="Wedler H."/>
            <person name="Woelfl S."/>
            <person name="Harris D.E."/>
            <person name="Bowman S."/>
            <person name="Brown D."/>
            <person name="Churcher C.M."/>
            <person name="Connor R."/>
            <person name="Dedman K."/>
            <person name="Gentles S."/>
            <person name="Hamlin N."/>
            <person name="Hunt S."/>
            <person name="Jones L."/>
            <person name="McDonald S."/>
            <person name="Murphy L.D."/>
            <person name="Niblett D."/>
            <person name="Odell C."/>
            <person name="Oliver K."/>
            <person name="Rajandream M.A."/>
            <person name="Richards C."/>
            <person name="Shore L."/>
            <person name="Walsh S.V."/>
            <person name="Barrell B.G."/>
            <person name="Dietrich F.S."/>
            <person name="Mulligan J.T."/>
            <person name="Allen E."/>
            <person name="Araujo R."/>
            <person name="Aviles E."/>
            <person name="Berno A."/>
            <person name="Carpenter J."/>
            <person name="Chen E."/>
            <person name="Cherry J.M."/>
            <person name="Chung E."/>
            <person name="Duncan M."/>
            <person name="Hunicke-Smith S."/>
            <person name="Hyman R.W."/>
            <person name="Komp C."/>
            <person name="Lashkari D."/>
            <person name="Lew H."/>
            <person name="Lin D."/>
            <person name="Mosedale D."/>
            <person name="Nakahara K."/>
            <person name="Namath A."/>
            <person name="Oefner P."/>
            <person name="Oh C."/>
            <person name="Petel F.X."/>
            <person name="Roberts D."/>
            <person name="Schramm S."/>
            <person name="Schroeder M."/>
            <person name="Shogren T."/>
            <person name="Shroff N."/>
            <person name="Winant A."/>
            <person name="Yelton M.A."/>
            <person name="Botstein D."/>
            <person name="Davis R.W."/>
            <person name="Johnston M."/>
            <person name="Andrews S."/>
            <person name="Brinkman R."/>
            <person name="Cooper J."/>
            <person name="Ding H."/>
            <person name="Du Z."/>
            <person name="Favello A."/>
            <person name="Fulton L."/>
            <person name="Gattung S."/>
            <person name="Greco T."/>
            <person name="Hallsworth K."/>
            <person name="Hawkins J."/>
            <person name="Hillier L.W."/>
            <person name="Jier M."/>
            <person name="Johnson D."/>
            <person name="Johnston L."/>
            <person name="Kirsten J."/>
            <person name="Kucaba T."/>
            <person name="Langston Y."/>
            <person name="Latreille P."/>
            <person name="Le T."/>
            <person name="Mardis E."/>
            <person name="Menezes S."/>
            <person name="Miller N."/>
            <person name="Nhan M."/>
            <person name="Pauley A."/>
            <person name="Peluso D."/>
            <person name="Rifkin L."/>
            <person name="Riles L."/>
            <person name="Taich A."/>
            <person name="Trevaskis E."/>
            <person name="Vignati D."/>
            <person name="Wilcox L."/>
            <person name="Wohldman P."/>
            <person name="Vaudin M."/>
            <person name="Wilson R."/>
            <person name="Waterston R."/>
            <person name="Albermann K."/>
            <person name="Hani J."/>
            <person name="Heumann K."/>
            <person name="Kleine K."/>
            <person name="Mewes H.-W."/>
            <person name="Zollner A."/>
            <person name="Zaccaria P."/>
        </authorList>
    </citation>
    <scope>NUCLEOTIDE SEQUENCE [LARGE SCALE GENOMIC DNA]</scope>
    <source>
        <strain>ATCC 204508 / S288c</strain>
    </source>
</reference>
<reference key="3">
    <citation type="journal article" date="2014" name="G3 (Bethesda)">
        <title>The reference genome sequence of Saccharomyces cerevisiae: Then and now.</title>
        <authorList>
            <person name="Engel S.R."/>
            <person name="Dietrich F.S."/>
            <person name="Fisk D.G."/>
            <person name="Binkley G."/>
            <person name="Balakrishnan R."/>
            <person name="Costanzo M.C."/>
            <person name="Dwight S.S."/>
            <person name="Hitz B.C."/>
            <person name="Karra K."/>
            <person name="Nash R.S."/>
            <person name="Weng S."/>
            <person name="Wong E.D."/>
            <person name="Lloyd P."/>
            <person name="Skrzypek M.S."/>
            <person name="Miyasato S.R."/>
            <person name="Simison M."/>
            <person name="Cherry J.M."/>
        </authorList>
    </citation>
    <scope>GENOME REANNOTATION</scope>
    <source>
        <strain>ATCC 204508 / S288c</strain>
    </source>
</reference>
<reference key="4">
    <citation type="journal article" date="2003" name="Arch. Biochem. Biophys.">
        <title>N-terminal modifications of the 19S regulatory particle subunits of the yeast proteasome.</title>
        <authorList>
            <person name="Kimura Y."/>
            <person name="Saeki Y."/>
            <person name="Yokosawa H."/>
            <person name="Polevoda B."/>
            <person name="Sherman F."/>
            <person name="Hirano H."/>
        </authorList>
    </citation>
    <scope>PROTEIN SEQUENCE OF 2-8</scope>
    <scope>ACETYLATION AT SER-2</scope>
</reference>
<reference key="5">
    <citation type="journal article" date="1997" name="Gene">
        <title>cDNA cloning and functional analysis of p44.5 and p55, two regulatory subunits of the 26S proteasome.</title>
        <authorList>
            <person name="Saito A."/>
            <person name="Watanabe T.K."/>
            <person name="Shimada Y."/>
            <person name="Fujiwara T."/>
            <person name="Slaughter C.A."/>
            <person name="DeMartino G.N."/>
            <person name="Tanahashi N."/>
            <person name="Tanaka K."/>
        </authorList>
    </citation>
    <scope>FUNCTION</scope>
</reference>
<reference key="6">
    <citation type="journal article" date="2003" name="Nature">
        <title>Global analysis of protein expression in yeast.</title>
        <authorList>
            <person name="Ghaemmaghami S."/>
            <person name="Huh W.-K."/>
            <person name="Bower K."/>
            <person name="Howson R.W."/>
            <person name="Belle A."/>
            <person name="Dephoure N."/>
            <person name="O'Shea E.K."/>
            <person name="Weissman J.S."/>
        </authorList>
    </citation>
    <scope>LEVEL OF PROTEIN EXPRESSION [LARGE SCALE ANALYSIS]</scope>
</reference>
<reference key="7">
    <citation type="journal article" date="2012" name="Proc. Natl. Acad. Sci. U.S.A.">
        <title>Near-atomic resolution structural model of the yeast 26S proteasome.</title>
        <authorList>
            <person name="Beck F."/>
            <person name="Unverdorben P."/>
            <person name="Bohn S."/>
            <person name="Schweitzer A."/>
            <person name="Pfeifer G."/>
            <person name="Sakata E."/>
            <person name="Nickell S."/>
            <person name="Plitzko J.M."/>
            <person name="Villa E."/>
            <person name="Baumeister W."/>
            <person name="Forster F."/>
        </authorList>
    </citation>
    <scope>STRUCTURE BY ELECTRON MICROSCOPY (7.4 ANGSTROMS) OF THE 26S PROTEASOME</scope>
</reference>
<organism>
    <name type="scientific">Saccharomyces cerevisiae (strain ATCC 204508 / S288c)</name>
    <name type="common">Baker's yeast</name>
    <dbReference type="NCBI Taxonomy" id="559292"/>
    <lineage>
        <taxon>Eukaryota</taxon>
        <taxon>Fungi</taxon>
        <taxon>Dikarya</taxon>
        <taxon>Ascomycota</taxon>
        <taxon>Saccharomycotina</taxon>
        <taxon>Saccharomycetes</taxon>
        <taxon>Saccharomycetales</taxon>
        <taxon>Saccharomycetaceae</taxon>
        <taxon>Saccharomyces</taxon>
    </lineage>
</organism>